<name>F120B_MOUSE</name>
<accession>Q6RI63</accession>
<accession>Q5DTU5</accession>
<accession>Q8BK59</accession>
<accession>Q8BVH5</accession>
<accession>Q8BWQ3</accession>
<accession>Q8C158</accession>
<accession>Q99LL4</accession>
<accession>Q9DAC3</accession>
<proteinExistence type="evidence at protein level"/>
<organism>
    <name type="scientific">Mus musculus</name>
    <name type="common">Mouse</name>
    <dbReference type="NCBI Taxonomy" id="10090"/>
    <lineage>
        <taxon>Eukaryota</taxon>
        <taxon>Metazoa</taxon>
        <taxon>Chordata</taxon>
        <taxon>Craniata</taxon>
        <taxon>Vertebrata</taxon>
        <taxon>Euteleostomi</taxon>
        <taxon>Mammalia</taxon>
        <taxon>Eutheria</taxon>
        <taxon>Euarchontoglires</taxon>
        <taxon>Glires</taxon>
        <taxon>Rodentia</taxon>
        <taxon>Myomorpha</taxon>
        <taxon>Muroidea</taxon>
        <taxon>Muridae</taxon>
        <taxon>Murinae</taxon>
        <taxon>Mus</taxon>
        <taxon>Mus</taxon>
    </lineage>
</organism>
<keyword id="KW-0010">Activator</keyword>
<keyword id="KW-0025">Alternative splicing</keyword>
<keyword id="KW-0221">Differentiation</keyword>
<keyword id="KW-0539">Nucleus</keyword>
<keyword id="KW-1185">Reference proteome</keyword>
<keyword id="KW-0804">Transcription</keyword>
<keyword id="KW-0805">Transcription regulation</keyword>
<reference key="1">
    <citation type="journal article" date="2007" name="Mol. Endocrinol.">
        <title>Constitutive coactivator of peroxisome proliferator-activated receptor (PPARgamma), a novel coactivator of PPARgamma that promotes adipogenesis.</title>
        <authorList>
            <person name="Li D."/>
            <person name="Kang Q."/>
            <person name="Wang D.-M."/>
        </authorList>
    </citation>
    <scope>NUCLEOTIDE SEQUENCE [MRNA] (ISOFORM 1)</scope>
    <scope>FUNCTION</scope>
    <scope>INTERACTION WITH ESR1; PPARG AND RXRA</scope>
    <scope>SUBCELLULAR LOCATION</scope>
    <scope>TISSUE SPECIFICITY</scope>
    <scope>DEVELOPMENTAL STAGE</scope>
    <scope>INDUCTION</scope>
    <source>
        <tissue>Lung</tissue>
    </source>
</reference>
<reference key="2">
    <citation type="journal article" date="2005" name="Science">
        <title>The transcriptional landscape of the mammalian genome.</title>
        <authorList>
            <person name="Carninci P."/>
            <person name="Kasukawa T."/>
            <person name="Katayama S."/>
            <person name="Gough J."/>
            <person name="Frith M.C."/>
            <person name="Maeda N."/>
            <person name="Oyama R."/>
            <person name="Ravasi T."/>
            <person name="Lenhard B."/>
            <person name="Wells C."/>
            <person name="Kodzius R."/>
            <person name="Shimokawa K."/>
            <person name="Bajic V.B."/>
            <person name="Brenner S.E."/>
            <person name="Batalov S."/>
            <person name="Forrest A.R."/>
            <person name="Zavolan M."/>
            <person name="Davis M.J."/>
            <person name="Wilming L.G."/>
            <person name="Aidinis V."/>
            <person name="Allen J.E."/>
            <person name="Ambesi-Impiombato A."/>
            <person name="Apweiler R."/>
            <person name="Aturaliya R.N."/>
            <person name="Bailey T.L."/>
            <person name="Bansal M."/>
            <person name="Baxter L."/>
            <person name="Beisel K.W."/>
            <person name="Bersano T."/>
            <person name="Bono H."/>
            <person name="Chalk A.M."/>
            <person name="Chiu K.P."/>
            <person name="Choudhary V."/>
            <person name="Christoffels A."/>
            <person name="Clutterbuck D.R."/>
            <person name="Crowe M.L."/>
            <person name="Dalla E."/>
            <person name="Dalrymple B.P."/>
            <person name="de Bono B."/>
            <person name="Della Gatta G."/>
            <person name="di Bernardo D."/>
            <person name="Down T."/>
            <person name="Engstrom P."/>
            <person name="Fagiolini M."/>
            <person name="Faulkner G."/>
            <person name="Fletcher C.F."/>
            <person name="Fukushima T."/>
            <person name="Furuno M."/>
            <person name="Futaki S."/>
            <person name="Gariboldi M."/>
            <person name="Georgii-Hemming P."/>
            <person name="Gingeras T.R."/>
            <person name="Gojobori T."/>
            <person name="Green R.E."/>
            <person name="Gustincich S."/>
            <person name="Harbers M."/>
            <person name="Hayashi Y."/>
            <person name="Hensch T.K."/>
            <person name="Hirokawa N."/>
            <person name="Hill D."/>
            <person name="Huminiecki L."/>
            <person name="Iacono M."/>
            <person name="Ikeo K."/>
            <person name="Iwama A."/>
            <person name="Ishikawa T."/>
            <person name="Jakt M."/>
            <person name="Kanapin A."/>
            <person name="Katoh M."/>
            <person name="Kawasawa Y."/>
            <person name="Kelso J."/>
            <person name="Kitamura H."/>
            <person name="Kitano H."/>
            <person name="Kollias G."/>
            <person name="Krishnan S.P."/>
            <person name="Kruger A."/>
            <person name="Kummerfeld S.K."/>
            <person name="Kurochkin I.V."/>
            <person name="Lareau L.F."/>
            <person name="Lazarevic D."/>
            <person name="Lipovich L."/>
            <person name="Liu J."/>
            <person name="Liuni S."/>
            <person name="McWilliam S."/>
            <person name="Madan Babu M."/>
            <person name="Madera M."/>
            <person name="Marchionni L."/>
            <person name="Matsuda H."/>
            <person name="Matsuzawa S."/>
            <person name="Miki H."/>
            <person name="Mignone F."/>
            <person name="Miyake S."/>
            <person name="Morris K."/>
            <person name="Mottagui-Tabar S."/>
            <person name="Mulder N."/>
            <person name="Nakano N."/>
            <person name="Nakauchi H."/>
            <person name="Ng P."/>
            <person name="Nilsson R."/>
            <person name="Nishiguchi S."/>
            <person name="Nishikawa S."/>
            <person name="Nori F."/>
            <person name="Ohara O."/>
            <person name="Okazaki Y."/>
            <person name="Orlando V."/>
            <person name="Pang K.C."/>
            <person name="Pavan W.J."/>
            <person name="Pavesi G."/>
            <person name="Pesole G."/>
            <person name="Petrovsky N."/>
            <person name="Piazza S."/>
            <person name="Reed J."/>
            <person name="Reid J.F."/>
            <person name="Ring B.Z."/>
            <person name="Ringwald M."/>
            <person name="Rost B."/>
            <person name="Ruan Y."/>
            <person name="Salzberg S.L."/>
            <person name="Sandelin A."/>
            <person name="Schneider C."/>
            <person name="Schoenbach C."/>
            <person name="Sekiguchi K."/>
            <person name="Semple C.A."/>
            <person name="Seno S."/>
            <person name="Sessa L."/>
            <person name="Sheng Y."/>
            <person name="Shibata Y."/>
            <person name="Shimada H."/>
            <person name="Shimada K."/>
            <person name="Silva D."/>
            <person name="Sinclair B."/>
            <person name="Sperling S."/>
            <person name="Stupka E."/>
            <person name="Sugiura K."/>
            <person name="Sultana R."/>
            <person name="Takenaka Y."/>
            <person name="Taki K."/>
            <person name="Tammoja K."/>
            <person name="Tan S.L."/>
            <person name="Tang S."/>
            <person name="Taylor M.S."/>
            <person name="Tegner J."/>
            <person name="Teichmann S.A."/>
            <person name="Ueda H.R."/>
            <person name="van Nimwegen E."/>
            <person name="Verardo R."/>
            <person name="Wei C.L."/>
            <person name="Yagi K."/>
            <person name="Yamanishi H."/>
            <person name="Zabarovsky E."/>
            <person name="Zhu S."/>
            <person name="Zimmer A."/>
            <person name="Hide W."/>
            <person name="Bult C."/>
            <person name="Grimmond S.M."/>
            <person name="Teasdale R.D."/>
            <person name="Liu E.T."/>
            <person name="Brusic V."/>
            <person name="Quackenbush J."/>
            <person name="Wahlestedt C."/>
            <person name="Mattick J.S."/>
            <person name="Hume D.A."/>
            <person name="Kai C."/>
            <person name="Sasaki D."/>
            <person name="Tomaru Y."/>
            <person name="Fukuda S."/>
            <person name="Kanamori-Katayama M."/>
            <person name="Suzuki M."/>
            <person name="Aoki J."/>
            <person name="Arakawa T."/>
            <person name="Iida J."/>
            <person name="Imamura K."/>
            <person name="Itoh M."/>
            <person name="Kato T."/>
            <person name="Kawaji H."/>
            <person name="Kawagashira N."/>
            <person name="Kawashima T."/>
            <person name="Kojima M."/>
            <person name="Kondo S."/>
            <person name="Konno H."/>
            <person name="Nakano K."/>
            <person name="Ninomiya N."/>
            <person name="Nishio T."/>
            <person name="Okada M."/>
            <person name="Plessy C."/>
            <person name="Shibata K."/>
            <person name="Shiraki T."/>
            <person name="Suzuki S."/>
            <person name="Tagami M."/>
            <person name="Waki K."/>
            <person name="Watahiki A."/>
            <person name="Okamura-Oho Y."/>
            <person name="Suzuki H."/>
            <person name="Kawai J."/>
            <person name="Hayashizaki Y."/>
        </authorList>
    </citation>
    <scope>NUCLEOTIDE SEQUENCE [LARGE SCALE MRNA] (ISOFORMS 1 AND 2)</scope>
    <source>
        <strain>C57BL/6J</strain>
        <tissue>Embryo</tissue>
        <tissue>Liver</tissue>
        <tissue>Olfactory bulb</tissue>
        <tissue>Skin</tissue>
        <tissue>Testis</tissue>
    </source>
</reference>
<reference key="3">
    <citation type="submission" date="2005-02" db="EMBL/GenBank/DDBJ databases">
        <title>Prediction of the coding sequences of mouse homologues of KIAA gene. The complete nucleotide sequences of mouse KIAA-homologous cDNAs identified by screening of terminal sequences of cDNA clones randomly sampled from size-fractionated libraries.</title>
        <authorList>
            <person name="Okazaki N."/>
            <person name="Kikuno R.F."/>
            <person name="Ohara R."/>
            <person name="Inamoto S."/>
            <person name="Nagase T."/>
            <person name="Ohara O."/>
            <person name="Koga H."/>
        </authorList>
    </citation>
    <scope>NUCLEOTIDE SEQUENCE [LARGE SCALE MRNA] (ISOFORM 2)</scope>
    <source>
        <tissue>Brain</tissue>
    </source>
</reference>
<reference key="4">
    <citation type="submission" date="2003-12" db="EMBL/GenBank/DDBJ databases">
        <title>Genomic sequence analysis in the mouse T-complex region.</title>
        <authorList>
            <person name="Nagaraja R."/>
            <person name="Waeltz P."/>
            <person name="Brathwaite M.E."/>
        </authorList>
    </citation>
    <scope>NUCLEOTIDE SEQUENCE [LARGE SCALE GENOMIC DNA]</scope>
    <source>
        <strain>C57BL/6J</strain>
    </source>
</reference>
<reference key="5">
    <citation type="journal article" date="2004" name="Genome Res.">
        <title>The status, quality, and expansion of the NIH full-length cDNA project: the Mammalian Gene Collection (MGC).</title>
        <authorList>
            <consortium name="The MGC Project Team"/>
        </authorList>
    </citation>
    <scope>NUCLEOTIDE SEQUENCE [LARGE SCALE MRNA] (ISOFORM 2)</scope>
    <scope>NUCLEOTIDE SEQUENCE [LARGE SCALE MRNA] OF 255-786 (ISOFORM 1)</scope>
    <source>
        <strain>C57BL/6J</strain>
        <strain>Czech II</strain>
        <tissue>Brain</tissue>
        <tissue>Mammary tumor</tissue>
    </source>
</reference>
<dbReference type="EMBL" id="DQ873694">
    <property type="protein sequence ID" value="ABH09085.1"/>
    <property type="molecule type" value="mRNA"/>
</dbReference>
<dbReference type="EMBL" id="AK005957">
    <property type="protein sequence ID" value="BAB24339.1"/>
    <property type="status" value="ALT_INIT"/>
    <property type="molecule type" value="mRNA"/>
</dbReference>
<dbReference type="EMBL" id="AK028911">
    <property type="protein sequence ID" value="BAC26191.1"/>
    <property type="molecule type" value="mRNA"/>
</dbReference>
<dbReference type="EMBL" id="AK050319">
    <property type="protein sequence ID" value="BAC34186.1"/>
    <property type="molecule type" value="mRNA"/>
</dbReference>
<dbReference type="EMBL" id="AK076185">
    <property type="protein sequence ID" value="BAC36239.1"/>
    <property type="molecule type" value="mRNA"/>
</dbReference>
<dbReference type="EMBL" id="AK078215">
    <property type="protein sequence ID" value="BAC37177.1"/>
    <property type="molecule type" value="mRNA"/>
</dbReference>
<dbReference type="EMBL" id="AK132211">
    <property type="protein sequence ID" value="BAE21035.1"/>
    <property type="molecule type" value="mRNA"/>
</dbReference>
<dbReference type="EMBL" id="AK220425">
    <property type="protein sequence ID" value="BAD90470.1"/>
    <property type="status" value="ALT_SEQ"/>
    <property type="molecule type" value="Transcribed_RNA"/>
</dbReference>
<dbReference type="EMBL" id="AY497019">
    <property type="protein sequence ID" value="AAR30868.1"/>
    <property type="molecule type" value="Genomic_DNA"/>
</dbReference>
<dbReference type="EMBL" id="BC003200">
    <property type="protein sequence ID" value="AAH03200.1"/>
    <property type="status" value="ALT_INIT"/>
    <property type="molecule type" value="mRNA"/>
</dbReference>
<dbReference type="EMBL" id="BC085163">
    <property type="protein sequence ID" value="AAH85163.1"/>
    <property type="molecule type" value="mRNA"/>
</dbReference>
<dbReference type="CCDS" id="CCDS37453.1">
    <molecule id="Q6RI63-1"/>
</dbReference>
<dbReference type="RefSeq" id="NP_001344751.1">
    <molecule id="Q6RI63-1"/>
    <property type="nucleotide sequence ID" value="NM_001357822.1"/>
</dbReference>
<dbReference type="RefSeq" id="NP_077165.2">
    <molecule id="Q6RI63-1"/>
    <property type="nucleotide sequence ID" value="NM_024203.3"/>
</dbReference>
<dbReference type="RefSeq" id="XP_006524890.1">
    <property type="nucleotide sequence ID" value="XM_006524827.3"/>
</dbReference>
<dbReference type="SMR" id="Q6RI63"/>
<dbReference type="BioGRID" id="212265">
    <property type="interactions" value="3"/>
</dbReference>
<dbReference type="FunCoup" id="Q6RI63">
    <property type="interactions" value="4497"/>
</dbReference>
<dbReference type="STRING" id="10090.ENSMUSP00000054420"/>
<dbReference type="iPTMnet" id="Q6RI63"/>
<dbReference type="PhosphoSitePlus" id="Q6RI63"/>
<dbReference type="PaxDb" id="10090-ENSMUSP00000054420"/>
<dbReference type="PeptideAtlas" id="Q6RI63"/>
<dbReference type="ProteomicsDB" id="275495">
    <molecule id="Q6RI63-1"/>
</dbReference>
<dbReference type="ProteomicsDB" id="275496">
    <molecule id="Q6RI63-2"/>
</dbReference>
<dbReference type="Pumba" id="Q6RI63"/>
<dbReference type="Antibodypedia" id="33580">
    <property type="antibodies" value="89 antibodies from 22 providers"/>
</dbReference>
<dbReference type="Ensembl" id="ENSMUST00000055352.8">
    <molecule id="Q6RI63-1"/>
    <property type="protein sequence ID" value="ENSMUSP00000054420.7"/>
    <property type="gene ID" value="ENSMUSG00000014763.9"/>
</dbReference>
<dbReference type="GeneID" id="67544"/>
<dbReference type="KEGG" id="mmu:67544"/>
<dbReference type="UCSC" id="uc008aoj.2">
    <molecule id="Q6RI63-1"/>
    <property type="organism name" value="mouse"/>
</dbReference>
<dbReference type="AGR" id="MGI:1914794"/>
<dbReference type="CTD" id="84498"/>
<dbReference type="MGI" id="MGI:1914794">
    <property type="gene designation" value="Fam120b"/>
</dbReference>
<dbReference type="VEuPathDB" id="HostDB:ENSMUSG00000014763"/>
<dbReference type="eggNOG" id="ENOG502QRMW">
    <property type="taxonomic scope" value="Eukaryota"/>
</dbReference>
<dbReference type="GeneTree" id="ENSGT00530000063168"/>
<dbReference type="HOGENOM" id="CLU_007639_0_0_1"/>
<dbReference type="InParanoid" id="Q6RI63"/>
<dbReference type="OMA" id="MPWEVFD"/>
<dbReference type="OrthoDB" id="25987at2759"/>
<dbReference type="PhylomeDB" id="Q6RI63"/>
<dbReference type="TreeFam" id="TF331093"/>
<dbReference type="BioGRID-ORCS" id="67544">
    <property type="hits" value="5 hits in 76 CRISPR screens"/>
</dbReference>
<dbReference type="ChiTaRS" id="Fam120b">
    <property type="organism name" value="mouse"/>
</dbReference>
<dbReference type="PRO" id="PR:Q6RI63"/>
<dbReference type="Proteomes" id="UP000000589">
    <property type="component" value="Chromosome 17"/>
</dbReference>
<dbReference type="RNAct" id="Q6RI63">
    <property type="molecule type" value="protein"/>
</dbReference>
<dbReference type="Bgee" id="ENSMUSG00000014763">
    <property type="expression patterns" value="Expressed in substantia nigra and 244 other cell types or tissues"/>
</dbReference>
<dbReference type="GO" id="GO:0005654">
    <property type="term" value="C:nucleoplasm"/>
    <property type="evidence" value="ECO:0000304"/>
    <property type="project" value="Reactome"/>
</dbReference>
<dbReference type="GO" id="GO:0005634">
    <property type="term" value="C:nucleus"/>
    <property type="evidence" value="ECO:0000314"/>
    <property type="project" value="MGI"/>
</dbReference>
<dbReference type="GO" id="GO:0045444">
    <property type="term" value="P:fat cell differentiation"/>
    <property type="evidence" value="ECO:0000315"/>
    <property type="project" value="MGI"/>
</dbReference>
<dbReference type="GO" id="GO:0035357">
    <property type="term" value="P:peroxisome proliferator activated receptor signaling pathway"/>
    <property type="evidence" value="ECO:0000353"/>
    <property type="project" value="MGI"/>
</dbReference>
<dbReference type="CDD" id="cd18672">
    <property type="entry name" value="PIN_FAM120B-like"/>
    <property type="match status" value="1"/>
</dbReference>
<dbReference type="FunFam" id="3.40.50.1010:FF:000013">
    <property type="entry name" value="Constitutive coactivator of peroxisome proliferator-activated receptor gamma"/>
    <property type="match status" value="1"/>
</dbReference>
<dbReference type="Gene3D" id="3.40.50.1010">
    <property type="entry name" value="5'-nuclease"/>
    <property type="match status" value="1"/>
</dbReference>
<dbReference type="InterPro" id="IPR026784">
    <property type="entry name" value="Coact_PPARg"/>
</dbReference>
<dbReference type="InterPro" id="IPR029060">
    <property type="entry name" value="PIN-like_dom_sf"/>
</dbReference>
<dbReference type="PANTHER" id="PTHR15976">
    <property type="entry name" value="CONSTITUTIVE COACTIVATOR OF PEROXISOME PROLIFERATOR-ACTIVATED RECEPTOR GAMMA"/>
    <property type="match status" value="1"/>
</dbReference>
<dbReference type="PANTHER" id="PTHR15976:SF17">
    <property type="entry name" value="CONSTITUTIVE COACTIVATOR OF PEROXISOME PROLIFERATOR-ACTIVATED RECEPTOR GAMMA"/>
    <property type="match status" value="1"/>
</dbReference>
<dbReference type="SUPFAM" id="SSF88723">
    <property type="entry name" value="PIN domain-like"/>
    <property type="match status" value="1"/>
</dbReference>
<sequence>MGVRGLQGFVGSTCPHICTIVNIHELAERHRNKYPGCTPTIVVDAMCCLRYWYTAESWVCGGQWREYYCALRNFVAAFTSAGIKLIFFFDGMVEPGKRDEWVKRRLKNNREISKIFHYIKSKRDQPGRNMFFIPSGLAIFTRFALKTLGQETFCSLQEADYEVASYGLQHNCLGILGEDTDYLIYDTCPYFSIGDLCLESLQTIMLCREKLCESLGLRVADLPLLACLLGNDITPESMFESFRYKCLSSYASVKENAGKKGNIILAVSDYISKVLHLYQGEKKIEEMLPLGPNKALFYKGVTSYLLPGQKSPWLVQKPKGMITDKQQMVSLNPESKQEVPMCIDPEFKQEVPVCTNPESMQEVPMCMDPEPNQEASMCTDPESKQEVPMCTDSESKPEVSQYTNPESKQKLPSGIDTEFNLEALMCTHPEFKQEDVMDMEPEIKQVTMVSESEILKVARMHHVHSESYLVYNILSSGEIECSNTLEDELDQALPSQAFIYRPVRQRVYALLLGDWKDGASTGPVVKEWFVYPGNSLKHPDLVRPLQMTVQGGTPSLEVLWLSQEPAVQAQRLDTLLACFNLSSSREELQAVESPLRALCCLLIYLFVQVDTLSLEDLHAFIAQALCLQGKSTSQLMHLQLDYINSRAVQLGSLLVRGLTTLVLVNSACGFPWTTSEFMPWNVFDGKLFHQKYLQSEKGYAVEVLLEQNRSWLTKFHNLKAVVCKACSKENRRIVGRTHWDSPYTGRQGRQGYSSYRTDSTHGHSGQSWRNQGSGGRQHERNHWRRY</sequence>
<comment type="function">
    <text evidence="2">Functions as a transactivator of PPARG and ESR1. Functions in adipogenesis through PPARG activation.</text>
</comment>
<comment type="subunit">
    <text evidence="2">Interacts with ESR1 and RXRA. Interacts with PPARG; in a ligand-independent manner.</text>
</comment>
<comment type="subcellular location">
    <subcellularLocation>
        <location evidence="2">Nucleus</location>
    </subcellularLocation>
</comment>
<comment type="alternative products">
    <event type="alternative splicing"/>
    <isoform>
        <id>Q6RI63-1</id>
        <name>1</name>
        <sequence type="displayed"/>
    </isoform>
    <isoform>
        <id>Q6RI63-2</id>
        <name>2</name>
        <sequence type="described" ref="VSP_033417 VSP_033418"/>
    </isoform>
</comment>
<comment type="tissue specificity">
    <text evidence="2">Ubiquitously expressed (at protein level).</text>
</comment>
<comment type="developmental stage">
    <text evidence="2">Expressed throughout the embryonic developmental stages from 5 dpc to 19 dpc (at protein level).</text>
</comment>
<comment type="induction">
    <text evidence="2">Up-regulated in differentiating adipocytes (at protein level).</text>
</comment>
<comment type="similarity">
    <text evidence="6">Belongs to the constitutive coactivator of PPAR-gamma family.</text>
</comment>
<comment type="sequence caution" evidence="6">
    <conflict type="erroneous initiation">
        <sequence resource="EMBL-CDS" id="AAH03200"/>
    </conflict>
</comment>
<comment type="sequence caution" evidence="6">
    <conflict type="erroneous initiation">
        <sequence resource="EMBL-CDS" id="BAB24339"/>
    </conflict>
</comment>
<comment type="sequence caution" evidence="6">
    <conflict type="erroneous translation">
        <sequence resource="EMBL-CDS" id="BAD90470"/>
    </conflict>
</comment>
<feature type="chain" id="PRO_0000332991" description="Constitutive coactivator of peroxisome proliferator-activated receptor gamma">
    <location>
        <begin position="1"/>
        <end position="786"/>
    </location>
</feature>
<feature type="region of interest" description="Mediates transactivation of PPARG">
    <location>
        <begin position="1"/>
        <end position="561"/>
    </location>
</feature>
<feature type="region of interest" description="Disordered" evidence="1">
    <location>
        <begin position="371"/>
        <end position="413"/>
    </location>
</feature>
<feature type="region of interest" description="Disordered" evidence="1">
    <location>
        <begin position="738"/>
        <end position="786"/>
    </location>
</feature>
<feature type="compositionally biased region" description="Polar residues" evidence="1">
    <location>
        <begin position="750"/>
        <end position="771"/>
    </location>
</feature>
<feature type="splice variant" id="VSP_033417" description="In isoform 2." evidence="3 4 5">
    <original>VARMHHVHSESYLVYNILSSGEIECSNTLEDELDQAL</original>
    <variation>ASDCASPTSVHNVVIESVPTNGFDREKRTVGGCRRETS</variation>
    <location>
        <begin position="457"/>
        <end position="493"/>
    </location>
</feature>
<feature type="splice variant" id="VSP_033418" description="In isoform 2." evidence="3 4 5">
    <location>
        <begin position="494"/>
        <end position="786"/>
    </location>
</feature>
<feature type="sequence conflict" description="In Ref. 2; BAC36239." evidence="6" ref="2">
    <original>I</original>
    <variation>N</variation>
    <location>
        <position position="41"/>
    </location>
</feature>
<feature type="sequence conflict" description="In Ref. 2; BAC34186." evidence="6" ref="2">
    <original>E</original>
    <variation>K</variation>
    <location>
        <position position="178"/>
    </location>
</feature>
<feature type="sequence conflict" description="In Ref. 5; AAH03200." evidence="6" ref="5">
    <original>V</original>
    <variation>I</variation>
    <location>
        <position position="549"/>
    </location>
</feature>
<gene>
    <name type="primary">Fam120b</name>
    <name type="synonym">Ccpg</name>
    <name type="synonym">Kiaa1838</name>
</gene>
<protein>
    <recommendedName>
        <fullName>Constitutive coactivator of peroxisome proliferator-activated receptor gamma</fullName>
        <shortName>Constitutive coactivator of PPAR-gamma</shortName>
        <shortName>Constitutive coactivator of PPARG</shortName>
    </recommendedName>
    <alternativeName>
        <fullName>Protein FAM120B</fullName>
    </alternativeName>
</protein>
<evidence type="ECO:0000256" key="1">
    <source>
        <dbReference type="SAM" id="MobiDB-lite"/>
    </source>
</evidence>
<evidence type="ECO:0000269" key="2">
    <source>
    </source>
</evidence>
<evidence type="ECO:0000303" key="3">
    <source>
    </source>
</evidence>
<evidence type="ECO:0000303" key="4">
    <source>
    </source>
</evidence>
<evidence type="ECO:0000303" key="5">
    <source ref="3"/>
</evidence>
<evidence type="ECO:0000305" key="6"/>